<name>UTP25_AJECH</name>
<sequence length="711" mass="79829">MAAPRGKGSRSSNSRGTRGARGKRQRGGRPAFETSRVEKINDDGLSGSDAEAESPPIDELSSDSDDYDADGEEKKIEKPYNTLLQLFNTSQDTNGPARKRRKVDHNSKKTEIQVEEQDELHDEADLSEPEITDDDEIEDPADVAAEEVEAGDSGDENDNSSSLSLNIKAISSKGWLSHKSELPGRFRLMFSHPDTGGDTVQLPAPIHGLQSLKLKQKLALHAGDHITKFDSLASGLAPSIFGYHDLLFGARTLSNSARFRDLYCLHVLNHILKTRDRVLKNNSRSQKVPDQDLELRDQGFTRPKVLIILPTRQACVRVMESITKLYHAEQQENKTKFYDTFSAADDKSWENKPDDFRELFGGNDDDMFRLGLKFTRKTIKYFSHFYNSDMILASPLGLRMVMDKEDSKKQDFDFLSSIEVAIVDQADALLMQNWEHVEYVFSHLNLQPKESHGCDFSRVRNWYLDGQAKYVRQTLVFSSFITPEINALFSSQMQNTAGKLKITPTYAGAILDLPLPVPVKQTFSRFDSTSPVNDPENRFKYFTNAVLSPLVRSSAGGRGNPSASGTLIFIPSYLDFVRVRNYLATSSQTENLSFGAISEYTSVRDVARARTHFFSGRHSALLYTERTHHFRRYQIRGVKRVIMYGVPENPVFWAEIVGFLGLDPAGAAEAAEGGVRALFSKWDALKMERIVGTKRLGNMLIEKGGDTFTFV</sequence>
<evidence type="ECO:0000250" key="1"/>
<evidence type="ECO:0000256" key="2">
    <source>
        <dbReference type="SAM" id="MobiDB-lite"/>
    </source>
</evidence>
<evidence type="ECO:0000305" key="3"/>
<proteinExistence type="inferred from homology"/>
<organism>
    <name type="scientific">Ajellomyces capsulatus (strain H143)</name>
    <name type="common">Darling's disease fungus</name>
    <name type="synonym">Histoplasma capsulatum</name>
    <dbReference type="NCBI Taxonomy" id="544712"/>
    <lineage>
        <taxon>Eukaryota</taxon>
        <taxon>Fungi</taxon>
        <taxon>Dikarya</taxon>
        <taxon>Ascomycota</taxon>
        <taxon>Pezizomycotina</taxon>
        <taxon>Eurotiomycetes</taxon>
        <taxon>Eurotiomycetidae</taxon>
        <taxon>Onygenales</taxon>
        <taxon>Ajellomycetaceae</taxon>
        <taxon>Histoplasma</taxon>
    </lineage>
</organism>
<feature type="chain" id="PRO_0000408093" description="U3 small nucleolar RNA-associated protein 25">
    <location>
        <begin position="1"/>
        <end position="711"/>
    </location>
</feature>
<feature type="region of interest" description="Disordered" evidence="2">
    <location>
        <begin position="1"/>
        <end position="137"/>
    </location>
</feature>
<feature type="compositionally biased region" description="Low complexity" evidence="2">
    <location>
        <begin position="1"/>
        <end position="17"/>
    </location>
</feature>
<feature type="compositionally biased region" description="Basic residues" evidence="2">
    <location>
        <begin position="18"/>
        <end position="27"/>
    </location>
</feature>
<feature type="compositionally biased region" description="Acidic residues" evidence="2">
    <location>
        <begin position="60"/>
        <end position="71"/>
    </location>
</feature>
<feature type="compositionally biased region" description="Polar residues" evidence="2">
    <location>
        <begin position="82"/>
        <end position="94"/>
    </location>
</feature>
<feature type="compositionally biased region" description="Acidic residues" evidence="2">
    <location>
        <begin position="113"/>
        <end position="137"/>
    </location>
</feature>
<dbReference type="EMBL" id="GG692434">
    <property type="protein sequence ID" value="EER37628.1"/>
    <property type="status" value="ALT_SEQ"/>
    <property type="molecule type" value="Genomic_DNA"/>
</dbReference>
<dbReference type="STRING" id="544712.C6HQ17"/>
<dbReference type="eggNOG" id="KOG2340">
    <property type="taxonomic scope" value="Eukaryota"/>
</dbReference>
<dbReference type="HOGENOM" id="CLU_018705_0_1_1"/>
<dbReference type="OrthoDB" id="10034at299071"/>
<dbReference type="Proteomes" id="UP000002624">
    <property type="component" value="Unassembled WGS sequence"/>
</dbReference>
<dbReference type="GO" id="GO:0005730">
    <property type="term" value="C:nucleolus"/>
    <property type="evidence" value="ECO:0007669"/>
    <property type="project" value="UniProtKB-SubCell"/>
</dbReference>
<dbReference type="GO" id="GO:0032040">
    <property type="term" value="C:small-subunit processome"/>
    <property type="evidence" value="ECO:0007669"/>
    <property type="project" value="TreeGrafter"/>
</dbReference>
<dbReference type="GO" id="GO:0019843">
    <property type="term" value="F:rRNA binding"/>
    <property type="evidence" value="ECO:0007669"/>
    <property type="project" value="TreeGrafter"/>
</dbReference>
<dbReference type="GO" id="GO:0034511">
    <property type="term" value="F:U3 snoRNA binding"/>
    <property type="evidence" value="ECO:0007669"/>
    <property type="project" value="InterPro"/>
</dbReference>
<dbReference type="GO" id="GO:0000462">
    <property type="term" value="P:maturation of SSU-rRNA from tricistronic rRNA transcript (SSU-rRNA, 5.8S rRNA, LSU-rRNA)"/>
    <property type="evidence" value="ECO:0007669"/>
    <property type="project" value="TreeGrafter"/>
</dbReference>
<dbReference type="FunFam" id="3.40.50.300:FF:002356">
    <property type="entry name" value="U3 small nucleolar RNA-associated protein 25"/>
    <property type="match status" value="1"/>
</dbReference>
<dbReference type="Gene3D" id="3.40.50.300">
    <property type="entry name" value="P-loop containing nucleotide triphosphate hydrolases"/>
    <property type="match status" value="1"/>
</dbReference>
<dbReference type="InterPro" id="IPR027417">
    <property type="entry name" value="P-loop_NTPase"/>
</dbReference>
<dbReference type="InterPro" id="IPR010678">
    <property type="entry name" value="UTP25"/>
</dbReference>
<dbReference type="InterPro" id="IPR053939">
    <property type="entry name" value="UTP25_C"/>
</dbReference>
<dbReference type="InterPro" id="IPR053940">
    <property type="entry name" value="UTP25_NTPase-like"/>
</dbReference>
<dbReference type="PANTHER" id="PTHR12933">
    <property type="entry name" value="ORF PROTEIN-RELATED"/>
    <property type="match status" value="1"/>
</dbReference>
<dbReference type="PANTHER" id="PTHR12933:SF0">
    <property type="entry name" value="U3 SMALL NUCLEOLAR RNA-ASSOCIATED PROTEIN 25 HOMOLOG"/>
    <property type="match status" value="1"/>
</dbReference>
<dbReference type="Pfam" id="PF06862">
    <property type="entry name" value="Utp25_C"/>
    <property type="match status" value="1"/>
</dbReference>
<dbReference type="Pfam" id="PF22916">
    <property type="entry name" value="UTP25_NTPase-like"/>
    <property type="match status" value="1"/>
</dbReference>
<keyword id="KW-0539">Nucleus</keyword>
<keyword id="KW-1185">Reference proteome</keyword>
<keyword id="KW-0687">Ribonucleoprotein</keyword>
<keyword id="KW-0690">Ribosome biogenesis</keyword>
<keyword id="KW-0698">rRNA processing</keyword>
<comment type="function">
    <text evidence="1">DEAD-box RNA helicase-like protein required for pre-18S rRNA processing, specifically at sites A0, A1, and A2.</text>
</comment>
<comment type="subunit">
    <text evidence="1">Component of the ribosomal small subunit (SSU) processome composed of at least 40 protein subunits and snoRNA U3.</text>
</comment>
<comment type="subcellular location">
    <subcellularLocation>
        <location evidence="1">Nucleus</location>
        <location evidence="1">Nucleolus</location>
    </subcellularLocation>
</comment>
<comment type="similarity">
    <text evidence="3">Belongs to the UTP25 family.</text>
</comment>
<comment type="sequence caution" evidence="3">
    <conflict type="erroneous gene model prediction">
        <sequence resource="EMBL-CDS" id="EER37628"/>
    </conflict>
</comment>
<reference key="1">
    <citation type="submission" date="2009-05" db="EMBL/GenBank/DDBJ databases">
        <title>The genome sequence of Ajellomyces capsulatus strain H143.</title>
        <authorList>
            <person name="Champion M."/>
            <person name="Cuomo C.A."/>
            <person name="Ma L.-J."/>
            <person name="Henn M.R."/>
            <person name="Sil A."/>
            <person name="Goldman B."/>
            <person name="Young S.K."/>
            <person name="Kodira C.D."/>
            <person name="Zeng Q."/>
            <person name="Koehrsen M."/>
            <person name="Alvarado L."/>
            <person name="Berlin A.M."/>
            <person name="Borenstein D."/>
            <person name="Chen Z."/>
            <person name="Engels R."/>
            <person name="Freedman E."/>
            <person name="Gellesch M."/>
            <person name="Goldberg J."/>
            <person name="Griggs A."/>
            <person name="Gujja S."/>
            <person name="Heiman D.I."/>
            <person name="Hepburn T.A."/>
            <person name="Howarth C."/>
            <person name="Jen D."/>
            <person name="Larson L."/>
            <person name="Lewis B."/>
            <person name="Mehta T."/>
            <person name="Park D."/>
            <person name="Pearson M."/>
            <person name="Roberts A."/>
            <person name="Saif S."/>
            <person name="Shea T.D."/>
            <person name="Shenoy N."/>
            <person name="Sisk P."/>
            <person name="Stolte C."/>
            <person name="Sykes S."/>
            <person name="Walk T."/>
            <person name="White J."/>
            <person name="Yandava C."/>
            <person name="Klein B."/>
            <person name="McEwen J.G."/>
            <person name="Puccia R."/>
            <person name="Goldman G.H."/>
            <person name="Felipe M.S."/>
            <person name="Nino-Vega G."/>
            <person name="San-Blas G."/>
            <person name="Taylor J.W."/>
            <person name="Mendoza L."/>
            <person name="Galagan J.E."/>
            <person name="Nusbaum C."/>
            <person name="Birren B.W."/>
        </authorList>
    </citation>
    <scope>NUCLEOTIDE SEQUENCE [LARGE SCALE GENOMIC DNA]</scope>
    <source>
        <strain>H143</strain>
    </source>
</reference>
<gene>
    <name type="primary">UTP25</name>
    <name type="ORF">HCDG_08298</name>
</gene>
<accession>C6HQ17</accession>
<protein>
    <recommendedName>
        <fullName>U3 small nucleolar RNA-associated protein 25</fullName>
        <shortName>U3 snoRNA-associated protein 25</shortName>
    </recommendedName>
    <alternativeName>
        <fullName>U three protein 25</fullName>
    </alternativeName>
</protein>